<comment type="function">
    <text evidence="1">Catalyzes the transfer of an acyl group from acyl-phosphate (acyl-PO(4)) to glycerol-3-phosphate (G3P) to form lysophosphatidic acid (LPA). This enzyme utilizes acyl-phosphate as fatty acyl donor, but not acyl-CoA or acyl-ACP.</text>
</comment>
<comment type="catalytic activity">
    <reaction evidence="1">
        <text>an acyl phosphate + sn-glycerol 3-phosphate = a 1-acyl-sn-glycero-3-phosphate + phosphate</text>
        <dbReference type="Rhea" id="RHEA:34075"/>
        <dbReference type="ChEBI" id="CHEBI:43474"/>
        <dbReference type="ChEBI" id="CHEBI:57597"/>
        <dbReference type="ChEBI" id="CHEBI:57970"/>
        <dbReference type="ChEBI" id="CHEBI:59918"/>
        <dbReference type="EC" id="2.3.1.275"/>
    </reaction>
</comment>
<comment type="pathway">
    <text evidence="1">Lipid metabolism; phospholipid metabolism.</text>
</comment>
<comment type="subunit">
    <text evidence="1">Probably interacts with PlsX.</text>
</comment>
<comment type="subcellular location">
    <subcellularLocation>
        <location evidence="1">Cell inner membrane</location>
        <topology evidence="1">Multi-pass membrane protein</topology>
    </subcellularLocation>
</comment>
<comment type="similarity">
    <text evidence="1">Belongs to the PlsY family.</text>
</comment>
<dbReference type="EC" id="2.3.1.275" evidence="1"/>
<dbReference type="EMBL" id="CP000352">
    <property type="protein sequence ID" value="ABF07403.1"/>
    <property type="molecule type" value="Genomic_DNA"/>
</dbReference>
<dbReference type="RefSeq" id="WP_008645034.1">
    <property type="nucleotide sequence ID" value="NC_007973.1"/>
</dbReference>
<dbReference type="SMR" id="Q1LR23"/>
<dbReference type="STRING" id="266264.Rmet_0517"/>
<dbReference type="DNASU" id="4037306"/>
<dbReference type="GeneID" id="60824114"/>
<dbReference type="KEGG" id="rme:Rmet_0517"/>
<dbReference type="eggNOG" id="COG0344">
    <property type="taxonomic scope" value="Bacteria"/>
</dbReference>
<dbReference type="HOGENOM" id="CLU_081254_0_0_4"/>
<dbReference type="UniPathway" id="UPA00085"/>
<dbReference type="Proteomes" id="UP000002429">
    <property type="component" value="Chromosome"/>
</dbReference>
<dbReference type="GO" id="GO:0005886">
    <property type="term" value="C:plasma membrane"/>
    <property type="evidence" value="ECO:0007669"/>
    <property type="project" value="UniProtKB-SubCell"/>
</dbReference>
<dbReference type="GO" id="GO:0043772">
    <property type="term" value="F:acyl-phosphate glycerol-3-phosphate acyltransferase activity"/>
    <property type="evidence" value="ECO:0007669"/>
    <property type="project" value="UniProtKB-UniRule"/>
</dbReference>
<dbReference type="GO" id="GO:0008654">
    <property type="term" value="P:phospholipid biosynthetic process"/>
    <property type="evidence" value="ECO:0007669"/>
    <property type="project" value="UniProtKB-UniRule"/>
</dbReference>
<dbReference type="HAMAP" id="MF_01043">
    <property type="entry name" value="PlsY"/>
    <property type="match status" value="1"/>
</dbReference>
<dbReference type="InterPro" id="IPR003811">
    <property type="entry name" value="G3P_acylTferase_PlsY"/>
</dbReference>
<dbReference type="NCBIfam" id="TIGR00023">
    <property type="entry name" value="glycerol-3-phosphate 1-O-acyltransferase PlsY"/>
    <property type="match status" value="1"/>
</dbReference>
<dbReference type="PANTHER" id="PTHR30309:SF0">
    <property type="entry name" value="GLYCEROL-3-PHOSPHATE ACYLTRANSFERASE-RELATED"/>
    <property type="match status" value="1"/>
</dbReference>
<dbReference type="PANTHER" id="PTHR30309">
    <property type="entry name" value="INNER MEMBRANE PROTEIN YGIH"/>
    <property type="match status" value="1"/>
</dbReference>
<dbReference type="Pfam" id="PF02660">
    <property type="entry name" value="G3P_acyltransf"/>
    <property type="match status" value="1"/>
</dbReference>
<dbReference type="SMART" id="SM01207">
    <property type="entry name" value="G3P_acyltransf"/>
    <property type="match status" value="1"/>
</dbReference>
<evidence type="ECO:0000255" key="1">
    <source>
        <dbReference type="HAMAP-Rule" id="MF_01043"/>
    </source>
</evidence>
<sequence>MINLLFAVIAYLIGSVSFAVVVSKVMGLPDPHSYGSGNPGATNVLRTGNKKAAIFTLIGDALKGLAAVLLAKHFGPAYGVDETGIALVALAVFLGHLFPLYHRFAGGKGVATAAGILFAIDPILGAGTLATWLIIAFFFRYSSLAALISAIFAPFFYVLMNGVDIMAGAILVISVLLIARHRANIAKLLAGKESRIGEKKKV</sequence>
<reference key="1">
    <citation type="journal article" date="2010" name="PLoS ONE">
        <title>The complete genome sequence of Cupriavidus metallidurans strain CH34, a master survivalist in harsh and anthropogenic environments.</title>
        <authorList>
            <person name="Janssen P.J."/>
            <person name="Van Houdt R."/>
            <person name="Moors H."/>
            <person name="Monsieurs P."/>
            <person name="Morin N."/>
            <person name="Michaux A."/>
            <person name="Benotmane M.A."/>
            <person name="Leys N."/>
            <person name="Vallaeys T."/>
            <person name="Lapidus A."/>
            <person name="Monchy S."/>
            <person name="Medigue C."/>
            <person name="Taghavi S."/>
            <person name="McCorkle S."/>
            <person name="Dunn J."/>
            <person name="van der Lelie D."/>
            <person name="Mergeay M."/>
        </authorList>
    </citation>
    <scope>NUCLEOTIDE SEQUENCE [LARGE SCALE GENOMIC DNA]</scope>
    <source>
        <strain>ATCC 43123 / DSM 2839 / NBRC 102507 / CH34</strain>
    </source>
</reference>
<feature type="chain" id="PRO_1000064213" description="Glycerol-3-phosphate acyltransferase">
    <location>
        <begin position="1"/>
        <end position="202"/>
    </location>
</feature>
<feature type="transmembrane region" description="Helical" evidence="1">
    <location>
        <begin position="2"/>
        <end position="22"/>
    </location>
</feature>
<feature type="transmembrane region" description="Helical" evidence="1">
    <location>
        <begin position="51"/>
        <end position="71"/>
    </location>
</feature>
<feature type="transmembrane region" description="Helical" evidence="1">
    <location>
        <begin position="80"/>
        <end position="100"/>
    </location>
</feature>
<feature type="transmembrane region" description="Helical" evidence="1">
    <location>
        <begin position="116"/>
        <end position="136"/>
    </location>
</feature>
<feature type="transmembrane region" description="Helical" evidence="1">
    <location>
        <begin position="137"/>
        <end position="157"/>
    </location>
</feature>
<feature type="transmembrane region" description="Helical" evidence="1">
    <location>
        <begin position="158"/>
        <end position="178"/>
    </location>
</feature>
<organism>
    <name type="scientific">Cupriavidus metallidurans (strain ATCC 43123 / DSM 2839 / NBRC 102507 / CH34)</name>
    <name type="common">Ralstonia metallidurans</name>
    <dbReference type="NCBI Taxonomy" id="266264"/>
    <lineage>
        <taxon>Bacteria</taxon>
        <taxon>Pseudomonadati</taxon>
        <taxon>Pseudomonadota</taxon>
        <taxon>Betaproteobacteria</taxon>
        <taxon>Burkholderiales</taxon>
        <taxon>Burkholderiaceae</taxon>
        <taxon>Cupriavidus</taxon>
    </lineage>
</organism>
<protein>
    <recommendedName>
        <fullName evidence="1">Glycerol-3-phosphate acyltransferase</fullName>
    </recommendedName>
    <alternativeName>
        <fullName evidence="1">Acyl-PO4 G3P acyltransferase</fullName>
    </alternativeName>
    <alternativeName>
        <fullName evidence="1">Acyl-phosphate--glycerol-3-phosphate acyltransferase</fullName>
    </alternativeName>
    <alternativeName>
        <fullName evidence="1">G3P acyltransferase</fullName>
        <shortName evidence="1">GPAT</shortName>
        <ecNumber evidence="1">2.3.1.275</ecNumber>
    </alternativeName>
    <alternativeName>
        <fullName evidence="1">Lysophosphatidic acid synthase</fullName>
        <shortName evidence="1">LPA synthase</shortName>
    </alternativeName>
</protein>
<proteinExistence type="inferred from homology"/>
<name>PLSY_CUPMC</name>
<accession>Q1LR23</accession>
<keyword id="KW-0997">Cell inner membrane</keyword>
<keyword id="KW-1003">Cell membrane</keyword>
<keyword id="KW-0444">Lipid biosynthesis</keyword>
<keyword id="KW-0443">Lipid metabolism</keyword>
<keyword id="KW-0472">Membrane</keyword>
<keyword id="KW-0594">Phospholipid biosynthesis</keyword>
<keyword id="KW-1208">Phospholipid metabolism</keyword>
<keyword id="KW-1185">Reference proteome</keyword>
<keyword id="KW-0808">Transferase</keyword>
<keyword id="KW-0812">Transmembrane</keyword>
<keyword id="KW-1133">Transmembrane helix</keyword>
<gene>
    <name evidence="1" type="primary">plsY</name>
    <name type="ordered locus">Rmet_0517</name>
</gene>